<comment type="function">
    <text evidence="1">Quinone reductase that provides resistance to thiol-specific stress caused by electrophilic quinones.</text>
</comment>
<comment type="function">
    <text evidence="1">Also exhibits azoreductase activity. Catalyzes the reductive cleavage of the azo bond in aromatic azo compounds to the corresponding amines.</text>
</comment>
<comment type="catalytic activity">
    <reaction evidence="1">
        <text>2 a quinone + NADH + H(+) = 2 a 1,4-benzosemiquinone + NAD(+)</text>
        <dbReference type="Rhea" id="RHEA:65952"/>
        <dbReference type="ChEBI" id="CHEBI:15378"/>
        <dbReference type="ChEBI" id="CHEBI:57540"/>
        <dbReference type="ChEBI" id="CHEBI:57945"/>
        <dbReference type="ChEBI" id="CHEBI:132124"/>
        <dbReference type="ChEBI" id="CHEBI:134225"/>
    </reaction>
</comment>
<comment type="catalytic activity">
    <reaction evidence="1">
        <text>N,N-dimethyl-1,4-phenylenediamine + anthranilate + 2 NAD(+) = 2-(4-dimethylaminophenyl)diazenylbenzoate + 2 NADH + 2 H(+)</text>
        <dbReference type="Rhea" id="RHEA:55872"/>
        <dbReference type="ChEBI" id="CHEBI:15378"/>
        <dbReference type="ChEBI" id="CHEBI:15783"/>
        <dbReference type="ChEBI" id="CHEBI:16567"/>
        <dbReference type="ChEBI" id="CHEBI:57540"/>
        <dbReference type="ChEBI" id="CHEBI:57945"/>
        <dbReference type="ChEBI" id="CHEBI:71579"/>
        <dbReference type="EC" id="1.7.1.17"/>
    </reaction>
</comment>
<comment type="cofactor">
    <cofactor evidence="1">
        <name>FMN</name>
        <dbReference type="ChEBI" id="CHEBI:58210"/>
    </cofactor>
    <text evidence="1">Binds 1 FMN per subunit.</text>
</comment>
<comment type="subunit">
    <text evidence="1">Homodimer.</text>
</comment>
<comment type="similarity">
    <text evidence="1">Belongs to the azoreductase type 1 family.</text>
</comment>
<name>AZOR1_PSESM</name>
<protein>
    <recommendedName>
        <fullName evidence="1">FMN-dependent NADH:quinone oxidoreductase 1</fullName>
        <ecNumber evidence="1">1.6.5.-</ecNumber>
    </recommendedName>
    <alternativeName>
        <fullName evidence="1">Azo-dye reductase 1</fullName>
    </alternativeName>
    <alternativeName>
        <fullName evidence="1">FMN-dependent NADH-azo compound oxidoreductase 1</fullName>
    </alternativeName>
    <alternativeName>
        <fullName evidence="1">FMN-dependent NADH-azoreductase 1</fullName>
        <ecNumber evidence="1">1.7.1.17</ecNumber>
    </alternativeName>
</protein>
<dbReference type="EC" id="1.6.5.-" evidence="1"/>
<dbReference type="EC" id="1.7.1.17" evidence="1"/>
<dbReference type="EMBL" id="AE016853">
    <property type="protein sequence ID" value="AAO56623.1"/>
    <property type="molecule type" value="Genomic_DNA"/>
</dbReference>
<dbReference type="RefSeq" id="NP_792928.1">
    <property type="nucleotide sequence ID" value="NC_004578.1"/>
</dbReference>
<dbReference type="RefSeq" id="WP_007246309.1">
    <property type="nucleotide sequence ID" value="NC_004578.1"/>
</dbReference>
<dbReference type="SMR" id="Q880L8"/>
<dbReference type="STRING" id="223283.PSPTO_3136"/>
<dbReference type="GeneID" id="1184793"/>
<dbReference type="KEGG" id="pst:PSPTO_3136"/>
<dbReference type="PATRIC" id="fig|223283.9.peg.3202"/>
<dbReference type="eggNOG" id="COG1182">
    <property type="taxonomic scope" value="Bacteria"/>
</dbReference>
<dbReference type="HOGENOM" id="CLU_088964_0_0_6"/>
<dbReference type="OrthoDB" id="9787136at2"/>
<dbReference type="PhylomeDB" id="Q880L8"/>
<dbReference type="Proteomes" id="UP000002515">
    <property type="component" value="Chromosome"/>
</dbReference>
<dbReference type="GO" id="GO:0009055">
    <property type="term" value="F:electron transfer activity"/>
    <property type="evidence" value="ECO:0007669"/>
    <property type="project" value="UniProtKB-UniRule"/>
</dbReference>
<dbReference type="GO" id="GO:0010181">
    <property type="term" value="F:FMN binding"/>
    <property type="evidence" value="ECO:0007669"/>
    <property type="project" value="UniProtKB-UniRule"/>
</dbReference>
<dbReference type="GO" id="GO:0016652">
    <property type="term" value="F:oxidoreductase activity, acting on NAD(P)H as acceptor"/>
    <property type="evidence" value="ECO:0007669"/>
    <property type="project" value="UniProtKB-UniRule"/>
</dbReference>
<dbReference type="GO" id="GO:0016655">
    <property type="term" value="F:oxidoreductase activity, acting on NAD(P)H, quinone or similar compound as acceptor"/>
    <property type="evidence" value="ECO:0007669"/>
    <property type="project" value="InterPro"/>
</dbReference>
<dbReference type="FunFam" id="3.40.50.360:FF:000049">
    <property type="entry name" value="FMN-dependent NADH-azoreductase"/>
    <property type="match status" value="1"/>
</dbReference>
<dbReference type="Gene3D" id="3.40.50.360">
    <property type="match status" value="1"/>
</dbReference>
<dbReference type="HAMAP" id="MF_01216">
    <property type="entry name" value="Azoreductase_type1"/>
    <property type="match status" value="1"/>
</dbReference>
<dbReference type="InterPro" id="IPR003680">
    <property type="entry name" value="Flavodoxin_fold"/>
</dbReference>
<dbReference type="InterPro" id="IPR029039">
    <property type="entry name" value="Flavoprotein-like_sf"/>
</dbReference>
<dbReference type="InterPro" id="IPR050104">
    <property type="entry name" value="FMN-dep_NADH:Q_OxRdtase_AzoR1"/>
</dbReference>
<dbReference type="InterPro" id="IPR023048">
    <property type="entry name" value="NADH:quinone_OxRdtase_FMN_depd"/>
</dbReference>
<dbReference type="PANTHER" id="PTHR43741">
    <property type="entry name" value="FMN-DEPENDENT NADH-AZOREDUCTASE 1"/>
    <property type="match status" value="1"/>
</dbReference>
<dbReference type="PANTHER" id="PTHR43741:SF4">
    <property type="entry name" value="FMN-DEPENDENT NADH:QUINONE OXIDOREDUCTASE"/>
    <property type="match status" value="1"/>
</dbReference>
<dbReference type="Pfam" id="PF02525">
    <property type="entry name" value="Flavodoxin_2"/>
    <property type="match status" value="1"/>
</dbReference>
<dbReference type="SUPFAM" id="SSF52218">
    <property type="entry name" value="Flavoproteins"/>
    <property type="match status" value="1"/>
</dbReference>
<keyword id="KW-0285">Flavoprotein</keyword>
<keyword id="KW-0288">FMN</keyword>
<keyword id="KW-0520">NAD</keyword>
<keyword id="KW-0560">Oxidoreductase</keyword>
<keyword id="KW-1185">Reference proteome</keyword>
<reference key="1">
    <citation type="journal article" date="2003" name="Proc. Natl. Acad. Sci. U.S.A.">
        <title>The complete genome sequence of the Arabidopsis and tomato pathogen Pseudomonas syringae pv. tomato DC3000.</title>
        <authorList>
            <person name="Buell C.R."/>
            <person name="Joardar V."/>
            <person name="Lindeberg M."/>
            <person name="Selengut J."/>
            <person name="Paulsen I.T."/>
            <person name="Gwinn M.L."/>
            <person name="Dodson R.J."/>
            <person name="DeBoy R.T."/>
            <person name="Durkin A.S."/>
            <person name="Kolonay J.F."/>
            <person name="Madupu R."/>
            <person name="Daugherty S.C."/>
            <person name="Brinkac L.M."/>
            <person name="Beanan M.J."/>
            <person name="Haft D.H."/>
            <person name="Nelson W.C."/>
            <person name="Davidsen T.M."/>
            <person name="Zafar N."/>
            <person name="Zhou L."/>
            <person name="Liu J."/>
            <person name="Yuan Q."/>
            <person name="Khouri H.M."/>
            <person name="Fedorova N.B."/>
            <person name="Tran B."/>
            <person name="Russell D."/>
            <person name="Berry K.J."/>
            <person name="Utterback T.R."/>
            <person name="Van Aken S.E."/>
            <person name="Feldblyum T.V."/>
            <person name="D'Ascenzo M."/>
            <person name="Deng W.-L."/>
            <person name="Ramos A.R."/>
            <person name="Alfano J.R."/>
            <person name="Cartinhour S."/>
            <person name="Chatterjee A.K."/>
            <person name="Delaney T.P."/>
            <person name="Lazarowitz S.G."/>
            <person name="Martin G.B."/>
            <person name="Schneider D.J."/>
            <person name="Tang X."/>
            <person name="Bender C.L."/>
            <person name="White O."/>
            <person name="Fraser C.M."/>
            <person name="Collmer A."/>
        </authorList>
    </citation>
    <scope>NUCLEOTIDE SEQUENCE [LARGE SCALE GENOMIC DNA]</scope>
    <source>
        <strain>ATCC BAA-871 / DC3000</strain>
    </source>
</reference>
<sequence>MNILHLDSSILGDHSASRQLSRDVVEAYKSTHADSHVTYRDLASEALGHFSAASLAAAGTPVEARDAAQQQEVDNNEATLQQFLDADVLVIGAPMYNFSIPSQLKAWIDRIAVAGRTFRYSEAGPEGLCGGKKVIIVSTSGGLHQGLPTGAGHEELLKALFAFIGITDLQFVRAHGLAYGEEPRANAMAAAKQQIESELLAA</sequence>
<feature type="chain" id="PRO_0000245956" description="FMN-dependent NADH:quinone oxidoreductase 1">
    <location>
        <begin position="1"/>
        <end position="202"/>
    </location>
</feature>
<feature type="binding site" evidence="1">
    <location>
        <position position="9"/>
    </location>
    <ligand>
        <name>FMN</name>
        <dbReference type="ChEBI" id="CHEBI:58210"/>
    </ligand>
</feature>
<feature type="binding site" evidence="1">
    <location>
        <begin position="15"/>
        <end position="17"/>
    </location>
    <ligand>
        <name>FMN</name>
        <dbReference type="ChEBI" id="CHEBI:58210"/>
    </ligand>
</feature>
<feature type="binding site" evidence="1">
    <location>
        <begin position="95"/>
        <end position="98"/>
    </location>
    <ligand>
        <name>FMN</name>
        <dbReference type="ChEBI" id="CHEBI:58210"/>
    </ligand>
</feature>
<feature type="binding site" evidence="1">
    <location>
        <begin position="139"/>
        <end position="142"/>
    </location>
    <ligand>
        <name>FMN</name>
        <dbReference type="ChEBI" id="CHEBI:58210"/>
    </ligand>
</feature>
<evidence type="ECO:0000255" key="1">
    <source>
        <dbReference type="HAMAP-Rule" id="MF_01216"/>
    </source>
</evidence>
<proteinExistence type="inferred from homology"/>
<accession>Q880L8</accession>
<organism>
    <name type="scientific">Pseudomonas syringae pv. tomato (strain ATCC BAA-871 / DC3000)</name>
    <dbReference type="NCBI Taxonomy" id="223283"/>
    <lineage>
        <taxon>Bacteria</taxon>
        <taxon>Pseudomonadati</taxon>
        <taxon>Pseudomonadota</taxon>
        <taxon>Gammaproteobacteria</taxon>
        <taxon>Pseudomonadales</taxon>
        <taxon>Pseudomonadaceae</taxon>
        <taxon>Pseudomonas</taxon>
    </lineage>
</organism>
<gene>
    <name evidence="1" type="primary">azoR1</name>
    <name type="ordered locus">PSPTO_3136</name>
</gene>